<name>ISCR_ENT38</name>
<organism>
    <name type="scientific">Enterobacter sp. (strain 638)</name>
    <dbReference type="NCBI Taxonomy" id="399742"/>
    <lineage>
        <taxon>Bacteria</taxon>
        <taxon>Pseudomonadati</taxon>
        <taxon>Pseudomonadota</taxon>
        <taxon>Gammaproteobacteria</taxon>
        <taxon>Enterobacterales</taxon>
        <taxon>Enterobacteriaceae</taxon>
        <taxon>Enterobacter</taxon>
    </lineage>
</organism>
<dbReference type="EMBL" id="CP000653">
    <property type="protein sequence ID" value="ABP61692.1"/>
    <property type="molecule type" value="Genomic_DNA"/>
</dbReference>
<dbReference type="RefSeq" id="WP_015960023.1">
    <property type="nucleotide sequence ID" value="NC_009436.1"/>
</dbReference>
<dbReference type="SMR" id="A4WDB2"/>
<dbReference type="STRING" id="399742.Ent638_3028"/>
<dbReference type="KEGG" id="ent:Ent638_3028"/>
<dbReference type="eggNOG" id="COG1959">
    <property type="taxonomic scope" value="Bacteria"/>
</dbReference>
<dbReference type="HOGENOM" id="CLU_107144_0_0_6"/>
<dbReference type="OrthoDB" id="9808360at2"/>
<dbReference type="Proteomes" id="UP000000230">
    <property type="component" value="Chromosome"/>
</dbReference>
<dbReference type="GO" id="GO:0005829">
    <property type="term" value="C:cytosol"/>
    <property type="evidence" value="ECO:0007669"/>
    <property type="project" value="TreeGrafter"/>
</dbReference>
<dbReference type="GO" id="GO:0051537">
    <property type="term" value="F:2 iron, 2 sulfur cluster binding"/>
    <property type="evidence" value="ECO:0007669"/>
    <property type="project" value="UniProtKB-KW"/>
</dbReference>
<dbReference type="GO" id="GO:0003700">
    <property type="term" value="F:DNA-binding transcription factor activity"/>
    <property type="evidence" value="ECO:0007669"/>
    <property type="project" value="UniProtKB-UniRule"/>
</dbReference>
<dbReference type="GO" id="GO:0003690">
    <property type="term" value="F:double-stranded DNA binding"/>
    <property type="evidence" value="ECO:0007669"/>
    <property type="project" value="UniProtKB-UniRule"/>
</dbReference>
<dbReference type="GO" id="GO:0005506">
    <property type="term" value="F:iron ion binding"/>
    <property type="evidence" value="ECO:0007669"/>
    <property type="project" value="UniProtKB-UniRule"/>
</dbReference>
<dbReference type="FunFam" id="1.10.10.10:FF:000026">
    <property type="entry name" value="HTH-type transcriptional regulator IscR"/>
    <property type="match status" value="1"/>
</dbReference>
<dbReference type="Gene3D" id="1.10.10.10">
    <property type="entry name" value="Winged helix-like DNA-binding domain superfamily/Winged helix DNA-binding domain"/>
    <property type="match status" value="1"/>
</dbReference>
<dbReference type="HAMAP" id="MF_01176">
    <property type="entry name" value="HTH_type_IscR"/>
    <property type="match status" value="1"/>
</dbReference>
<dbReference type="InterPro" id="IPR010242">
    <property type="entry name" value="TF_HTH_IscR"/>
</dbReference>
<dbReference type="InterPro" id="IPR030489">
    <property type="entry name" value="TR_Rrf2-type_CS"/>
</dbReference>
<dbReference type="InterPro" id="IPR000944">
    <property type="entry name" value="Tscrpt_reg_Rrf2"/>
</dbReference>
<dbReference type="InterPro" id="IPR036388">
    <property type="entry name" value="WH-like_DNA-bd_sf"/>
</dbReference>
<dbReference type="InterPro" id="IPR036390">
    <property type="entry name" value="WH_DNA-bd_sf"/>
</dbReference>
<dbReference type="NCBIfam" id="TIGR02010">
    <property type="entry name" value="IscR"/>
    <property type="match status" value="1"/>
</dbReference>
<dbReference type="NCBIfam" id="NF008110">
    <property type="entry name" value="PRK10857.1"/>
    <property type="match status" value="1"/>
</dbReference>
<dbReference type="NCBIfam" id="TIGR00738">
    <property type="entry name" value="rrf2_super"/>
    <property type="match status" value="1"/>
</dbReference>
<dbReference type="PANTHER" id="PTHR33221:SF5">
    <property type="entry name" value="HTH-TYPE TRANSCRIPTIONAL REGULATOR ISCR"/>
    <property type="match status" value="1"/>
</dbReference>
<dbReference type="PANTHER" id="PTHR33221">
    <property type="entry name" value="WINGED HELIX-TURN-HELIX TRANSCRIPTIONAL REGULATOR, RRF2 FAMILY"/>
    <property type="match status" value="1"/>
</dbReference>
<dbReference type="Pfam" id="PF02082">
    <property type="entry name" value="Rrf2"/>
    <property type="match status" value="1"/>
</dbReference>
<dbReference type="SUPFAM" id="SSF46785">
    <property type="entry name" value="Winged helix' DNA-binding domain"/>
    <property type="match status" value="1"/>
</dbReference>
<dbReference type="PROSITE" id="PS01332">
    <property type="entry name" value="HTH_RRF2_1"/>
    <property type="match status" value="1"/>
</dbReference>
<dbReference type="PROSITE" id="PS51197">
    <property type="entry name" value="HTH_RRF2_2"/>
    <property type="match status" value="1"/>
</dbReference>
<comment type="function">
    <text evidence="1">Regulates the transcription of several operons and genes involved in the biogenesis of Fe-S clusters and Fe-S-containing proteins.</text>
</comment>
<comment type="cofactor">
    <cofactor evidence="1">
        <name>[2Fe-2S] cluster</name>
        <dbReference type="ChEBI" id="CHEBI:190135"/>
    </cofactor>
    <text evidence="1">Binds 1 [2Fe-2S] cluster.</text>
</comment>
<proteinExistence type="inferred from homology"/>
<reference key="1">
    <citation type="journal article" date="2010" name="PLoS Genet.">
        <title>Genome sequence of the plant growth promoting endophytic bacterium Enterobacter sp. 638.</title>
        <authorList>
            <person name="Taghavi S."/>
            <person name="van der Lelie D."/>
            <person name="Hoffman A."/>
            <person name="Zhang Y.B."/>
            <person name="Walla M.D."/>
            <person name="Vangronsveld J."/>
            <person name="Newman L."/>
            <person name="Monchy S."/>
        </authorList>
    </citation>
    <scope>NUCLEOTIDE SEQUENCE [LARGE SCALE GENOMIC DNA]</scope>
    <source>
        <strain>638</strain>
    </source>
</reference>
<accession>A4WDB2</accession>
<keyword id="KW-0001">2Fe-2S</keyword>
<keyword id="KW-0010">Activator</keyword>
<keyword id="KW-0238">DNA-binding</keyword>
<keyword id="KW-0408">Iron</keyword>
<keyword id="KW-0411">Iron-sulfur</keyword>
<keyword id="KW-0479">Metal-binding</keyword>
<keyword id="KW-0678">Repressor</keyword>
<keyword id="KW-0804">Transcription</keyword>
<keyword id="KW-0805">Transcription regulation</keyword>
<evidence type="ECO:0000255" key="1">
    <source>
        <dbReference type="HAMAP-Rule" id="MF_01176"/>
    </source>
</evidence>
<protein>
    <recommendedName>
        <fullName evidence="1">HTH-type transcriptional regulator IscR</fullName>
    </recommendedName>
</protein>
<feature type="chain" id="PRO_1000085419" description="HTH-type transcriptional regulator IscR">
    <location>
        <begin position="1"/>
        <end position="163"/>
    </location>
</feature>
<feature type="domain" description="HTH rrf2-type" evidence="1">
    <location>
        <begin position="2"/>
        <end position="131"/>
    </location>
</feature>
<feature type="DNA-binding region" description="H-T-H motif" evidence="1">
    <location>
        <begin position="28"/>
        <end position="51"/>
    </location>
</feature>
<feature type="binding site" evidence="1">
    <location>
        <position position="92"/>
    </location>
    <ligand>
        <name>[2Fe-2S] cluster</name>
        <dbReference type="ChEBI" id="CHEBI:190135"/>
    </ligand>
</feature>
<feature type="binding site" evidence="1">
    <location>
        <position position="98"/>
    </location>
    <ligand>
        <name>[2Fe-2S] cluster</name>
        <dbReference type="ChEBI" id="CHEBI:190135"/>
    </ligand>
</feature>
<feature type="binding site" evidence="1">
    <location>
        <position position="104"/>
    </location>
    <ligand>
        <name>[2Fe-2S] cluster</name>
        <dbReference type="ChEBI" id="CHEBI:190135"/>
    </ligand>
</feature>
<sequence>MRLTSKGRYAVTAMLDVALNSETGPVPLADISERQGISLSYLEQLFSRLRKNGLVSSVRGPGGGYLLGKDAGSIAVGEVISAVDESVDATRCQGKGGCQGGDKCLTHALWRDLSDRLTGFLNNITLGELVNNQEVLDVSGRQQSHETQRTTRAQDAIDVKLRA</sequence>
<gene>
    <name evidence="1" type="primary">iscR</name>
    <name type="ordered locus">Ent638_3028</name>
</gene>